<keyword id="KW-0025">Alternative splicing</keyword>
<keyword id="KW-0963">Cytoplasm</keyword>
<keyword id="KW-0539">Nucleus</keyword>
<keyword id="KW-0656">Proto-oncogene</keyword>
<keyword id="KW-1185">Reference proteome</keyword>
<keyword id="KW-0729">SH3-binding</keyword>
<name>PTTG2_HUMAN</name>
<protein>
    <recommendedName>
        <fullName>Securin-2</fullName>
    </recommendedName>
    <alternativeName>
        <fullName>Pituitary tumor-transforming gene 2 protein</fullName>
    </alternativeName>
</protein>
<comment type="interaction">
    <interactant intactId="EBI-17630019">
        <id>Q9NZH5-2</id>
    </interactant>
    <interactant intactId="EBI-712648">
        <id>O95994</id>
        <label>AGR2</label>
    </interactant>
    <organismsDiffer>false</organismsDiffer>
    <experiments>3</experiments>
</comment>
<comment type="interaction">
    <interactant intactId="EBI-17630019">
        <id>Q9NZH5-2</id>
    </interactant>
    <interactant intactId="EBI-348169">
        <id>P67870</id>
        <label>CSNK2B</label>
    </interactant>
    <organismsDiffer>false</organismsDiffer>
    <experiments>3</experiments>
</comment>
<comment type="interaction">
    <interactant intactId="EBI-17630019">
        <id>Q9NZH5-2</id>
    </interactant>
    <interactant intactId="EBI-12112376">
        <id>A0A0C4DGQ7</id>
        <label>EML2</label>
    </interactant>
    <organismsDiffer>false</organismsDiffer>
    <experiments>3</experiments>
</comment>
<comment type="interaction">
    <interactant intactId="EBI-17630019">
        <id>Q9NZH5-2</id>
    </interactant>
    <interactant intactId="EBI-12754095">
        <id>P86480</id>
        <label>PRR20D</label>
    </interactant>
    <organismsDiffer>false</organismsDiffer>
    <experiments>3</experiments>
</comment>
<comment type="interaction">
    <interactant intactId="EBI-17630019">
        <id>Q9NZH5-2</id>
    </interactant>
    <interactant intactId="EBI-1504830">
        <id>Q9P2K3-2</id>
        <label>RCOR3</label>
    </interactant>
    <organismsDiffer>false</organismsDiffer>
    <experiments>3</experiments>
</comment>
<comment type="interaction">
    <interactant intactId="EBI-17630019">
        <id>Q9NZH5-2</id>
    </interactant>
    <interactant intactId="EBI-10226430">
        <id>Q0D2K3</id>
        <label>RIPPLY1</label>
    </interactant>
    <organismsDiffer>false</organismsDiffer>
    <experiments>3</experiments>
</comment>
<comment type="interaction">
    <interactant intactId="EBI-17630019">
        <id>Q9NZH5-2</id>
    </interactant>
    <interactant intactId="EBI-3921347">
        <id>P51687</id>
        <label>SUOX</label>
    </interactant>
    <organismsDiffer>false</organismsDiffer>
    <experiments>3</experiments>
</comment>
<comment type="subcellular location">
    <subcellularLocation>
        <location evidence="1">Cytoplasm</location>
    </subcellularLocation>
    <subcellularLocation>
        <location evidence="1">Nucleus</location>
    </subcellularLocation>
</comment>
<comment type="alternative products">
    <event type="alternative splicing"/>
    <isoform>
        <id>Q9NZH5-1</id>
        <name>1</name>
        <sequence type="displayed"/>
    </isoform>
    <isoform>
        <id>Q9NZH5-2</id>
        <name>2</name>
        <sequence type="described" ref="VSP_031444"/>
    </isoform>
</comment>
<comment type="tissue specificity">
    <text evidence="3 4">Expressed at low levels in the pituitary, liver, spleen, prostate, testis, ovary, small intestine and colon. Also expressed in various pituitary, testicular, liver and ovarian tumors.</text>
</comment>
<comment type="domain">
    <text evidence="1">The N-terminal destruction box (D-box) acts as a recognition signal for degradation via the ubiquitin-proteasome pathway.</text>
</comment>
<comment type="similarity">
    <text evidence="8">Belongs to the securin family.</text>
</comment>
<proteinExistence type="evidence at protein level"/>
<evidence type="ECO:0000250" key="1"/>
<evidence type="ECO:0000256" key="2">
    <source>
        <dbReference type="SAM" id="MobiDB-lite"/>
    </source>
</evidence>
<evidence type="ECO:0000269" key="3">
    <source>
    </source>
</evidence>
<evidence type="ECO:0000269" key="4">
    <source>
    </source>
</evidence>
<evidence type="ECO:0000269" key="5">
    <source ref="3"/>
</evidence>
<evidence type="ECO:0000303" key="6">
    <source>
    </source>
</evidence>
<evidence type="ECO:0000303" key="7">
    <source ref="3"/>
</evidence>
<evidence type="ECO:0000305" key="8"/>
<dbReference type="EMBL" id="AF116538">
    <property type="protein sequence ID" value="AAD41262.2"/>
    <property type="molecule type" value="Genomic_DNA"/>
</dbReference>
<dbReference type="EMBL" id="AF200719">
    <property type="protein sequence ID" value="AAF72579.1"/>
    <property type="molecule type" value="Genomic_DNA"/>
</dbReference>
<dbReference type="EMBL" id="AF095288">
    <property type="protein sequence ID" value="AAC64410.1"/>
    <property type="molecule type" value="mRNA"/>
</dbReference>
<dbReference type="EMBL" id="AC021106">
    <property type="status" value="NOT_ANNOTATED_CDS"/>
    <property type="molecule type" value="Genomic_DNA"/>
</dbReference>
<dbReference type="EMBL" id="BC069114">
    <property type="protein sequence ID" value="AAH69114.1"/>
    <property type="molecule type" value="mRNA"/>
</dbReference>
<dbReference type="EMBL" id="BC069400">
    <property type="protein sequence ID" value="AAH69400.1"/>
    <property type="molecule type" value="mRNA"/>
</dbReference>
<dbReference type="CCDS" id="CCDS54755.1">
    <molecule id="Q9NZH5-2"/>
</dbReference>
<dbReference type="RefSeq" id="NP_006598.2">
    <molecule id="Q9NZH5-2"/>
    <property type="nucleotide sequence ID" value="NM_006607.3"/>
</dbReference>
<dbReference type="BioGRID" id="115967">
    <property type="interactions" value="15"/>
</dbReference>
<dbReference type="FunCoup" id="Q9NZH5">
    <property type="interactions" value="233"/>
</dbReference>
<dbReference type="IntAct" id="Q9NZH5">
    <property type="interactions" value="7"/>
</dbReference>
<dbReference type="STRING" id="9606.ENSP00000424261"/>
<dbReference type="iPTMnet" id="Q9NZH5"/>
<dbReference type="PhosphoSitePlus" id="Q9NZH5"/>
<dbReference type="BioMuta" id="PTTG2"/>
<dbReference type="DMDM" id="357529040"/>
<dbReference type="jPOST" id="Q9NZH5"/>
<dbReference type="MassIVE" id="Q9NZH5"/>
<dbReference type="PaxDb" id="9606-ENSP00000424261"/>
<dbReference type="PeptideAtlas" id="Q9NZH5"/>
<dbReference type="ProteomicsDB" id="83388">
    <molecule id="Q9NZH5-1"/>
</dbReference>
<dbReference type="ProteomicsDB" id="83389">
    <molecule id="Q9NZH5-2"/>
</dbReference>
<dbReference type="Pumba" id="Q9NZH5"/>
<dbReference type="Antibodypedia" id="43813">
    <property type="antibodies" value="121 antibodies from 17 providers"/>
</dbReference>
<dbReference type="DNASU" id="10744"/>
<dbReference type="Ensembl" id="ENST00000504686.2">
    <molecule id="Q9NZH5-2"/>
    <property type="protein sequence ID" value="ENSP00000424261.1"/>
    <property type="gene ID" value="ENSG00000250254.2"/>
</dbReference>
<dbReference type="GeneID" id="10744"/>
<dbReference type="KEGG" id="hsa:10744"/>
<dbReference type="MANE-Select" id="ENST00000504686.2">
    <molecule id="Q9NZH5-2"/>
    <property type="protein sequence ID" value="ENSP00000424261.1"/>
    <property type="RefSeq nucleotide sequence ID" value="NM_006607.3"/>
    <property type="RefSeq protein sequence ID" value="NP_006598.2"/>
</dbReference>
<dbReference type="UCSC" id="uc011bye.3">
    <molecule id="Q9NZH5-1"/>
    <property type="organism name" value="human"/>
</dbReference>
<dbReference type="AGR" id="HGNC:9691"/>
<dbReference type="CTD" id="10744"/>
<dbReference type="DisGeNET" id="10744"/>
<dbReference type="GeneCards" id="PTTG2"/>
<dbReference type="HGNC" id="HGNC:9691">
    <property type="gene designation" value="PTTG2"/>
</dbReference>
<dbReference type="HPA" id="ENSG00000250254">
    <property type="expression patterns" value="Low tissue specificity"/>
</dbReference>
<dbReference type="MIM" id="604231">
    <property type="type" value="gene"/>
</dbReference>
<dbReference type="neXtProt" id="NX_Q9NZH5"/>
<dbReference type="OpenTargets" id="ENSG00000250254"/>
<dbReference type="PharmGKB" id="PA34035"/>
<dbReference type="VEuPathDB" id="HostDB:ENSG00000250254"/>
<dbReference type="eggNOG" id="ENOG502S2GG">
    <property type="taxonomic scope" value="Eukaryota"/>
</dbReference>
<dbReference type="GeneTree" id="ENSGT00390000009693"/>
<dbReference type="HOGENOM" id="CLU_1363209_0_0_1"/>
<dbReference type="InParanoid" id="Q9NZH5"/>
<dbReference type="OMA" id="VELPIVC"/>
<dbReference type="OrthoDB" id="9905975at2759"/>
<dbReference type="PAN-GO" id="Q9NZH5">
    <property type="GO annotations" value="3 GO annotations based on evolutionary models"/>
</dbReference>
<dbReference type="TreeFam" id="TF330797"/>
<dbReference type="PathwayCommons" id="Q9NZH5"/>
<dbReference type="SignaLink" id="Q9NZH5"/>
<dbReference type="SIGNOR" id="Q9NZH5"/>
<dbReference type="BioGRID-ORCS" id="10744">
    <property type="hits" value="37 hits in 1058 CRISPR screens"/>
</dbReference>
<dbReference type="GenomeRNAi" id="10744"/>
<dbReference type="Pharos" id="Q9NZH5">
    <property type="development level" value="Tbio"/>
</dbReference>
<dbReference type="PRO" id="PR:Q9NZH5"/>
<dbReference type="Proteomes" id="UP000005640">
    <property type="component" value="Chromosome 4"/>
</dbReference>
<dbReference type="RNAct" id="Q9NZH5">
    <property type="molecule type" value="protein"/>
</dbReference>
<dbReference type="Bgee" id="ENSG00000250254">
    <property type="expression patterns" value="Expressed in male germ line stem cell (sensu Vertebrata) in testis and 99 other cell types or tissues"/>
</dbReference>
<dbReference type="GO" id="GO:0005737">
    <property type="term" value="C:cytoplasm"/>
    <property type="evidence" value="ECO:0007669"/>
    <property type="project" value="UniProtKB-SubCell"/>
</dbReference>
<dbReference type="GO" id="GO:0005634">
    <property type="term" value="C:nucleus"/>
    <property type="evidence" value="ECO:0000318"/>
    <property type="project" value="GO_Central"/>
</dbReference>
<dbReference type="GO" id="GO:0017124">
    <property type="term" value="F:SH3 domain binding"/>
    <property type="evidence" value="ECO:0007669"/>
    <property type="project" value="UniProtKB-KW"/>
</dbReference>
<dbReference type="GO" id="GO:0051276">
    <property type="term" value="P:chromosome organization"/>
    <property type="evidence" value="ECO:0007669"/>
    <property type="project" value="InterPro"/>
</dbReference>
<dbReference type="GO" id="GO:0045143">
    <property type="term" value="P:homologous chromosome segregation"/>
    <property type="evidence" value="ECO:0000318"/>
    <property type="project" value="GO_Central"/>
</dbReference>
<dbReference type="InterPro" id="IPR006940">
    <property type="entry name" value="Securin_separation_inhibitor"/>
</dbReference>
<dbReference type="PANTHER" id="PTHR10418:SF8">
    <property type="entry name" value="SECURIN-2"/>
    <property type="match status" value="1"/>
</dbReference>
<dbReference type="PANTHER" id="PTHR10418">
    <property type="entry name" value="SECURIN-3"/>
    <property type="match status" value="1"/>
</dbReference>
<dbReference type="Pfam" id="PF04856">
    <property type="entry name" value="Securin"/>
    <property type="match status" value="1"/>
</dbReference>
<accession>Q9NZH5</accession>
<accession>O95355</accession>
<accession>Q6NTC9</accession>
<accession>Q9UNJ6</accession>
<organism>
    <name type="scientific">Homo sapiens</name>
    <name type="common">Human</name>
    <dbReference type="NCBI Taxonomy" id="9606"/>
    <lineage>
        <taxon>Eukaryota</taxon>
        <taxon>Metazoa</taxon>
        <taxon>Chordata</taxon>
        <taxon>Craniata</taxon>
        <taxon>Vertebrata</taxon>
        <taxon>Euteleostomi</taxon>
        <taxon>Mammalia</taxon>
        <taxon>Eutheria</taxon>
        <taxon>Euarchontoglires</taxon>
        <taxon>Primates</taxon>
        <taxon>Haplorrhini</taxon>
        <taxon>Catarrhini</taxon>
        <taxon>Hominidae</taxon>
        <taxon>Homo</taxon>
    </lineage>
</organism>
<feature type="chain" id="PRO_0000319106" description="Securin-2">
    <location>
        <begin position="1"/>
        <end position="202"/>
    </location>
</feature>
<feature type="region of interest" description="Disordered" evidence="2">
    <location>
        <begin position="60"/>
        <end position="105"/>
    </location>
</feature>
<feature type="short sequence motif" description="D-box" evidence="1">
    <location>
        <begin position="61"/>
        <end position="64"/>
    </location>
</feature>
<feature type="short sequence motif" description="SH3-binding" evidence="1">
    <location>
        <begin position="163"/>
        <end position="173"/>
    </location>
</feature>
<feature type="splice variant" id="VSP_031444" description="In isoform 2." evidence="6 7">
    <original>LQSPSSILSTLDVELPAVCYDIDI</original>
    <variation>FAVSFKHSVDPGC</variation>
    <location>
        <begin position="179"/>
        <end position="202"/>
    </location>
</feature>
<feature type="sequence variant" id="VAR_038956" description="In dbSNP:rs6811863." evidence="3 4 5">
    <original>R</original>
    <variation>P</variation>
    <location>
        <position position="44"/>
    </location>
</feature>
<gene>
    <name type="primary">PTTG2</name>
</gene>
<sequence>MATLIYVDKEIGEPGTRVAAKDVLKLESRPSIKALDGISQVLTRRFGKTYDAPSALPKATRKALGTVNRATEKSVKTNGPRKQKQPSFSAKKMTEKTVKTKSSVPASDDAYPEIEKFFPFNLLDFESFDLPEERQIAHLPLSGVPLMILDEEGELEKLFQLGPPSPVKMPSPPWECNLLQSPSSILSTLDVELPAVCYDIDI</sequence>
<reference key="1">
    <citation type="journal article" date="1999" name="J. Clin. Endocrinol. Metab.">
        <title>An intronless homolog of human proto-oncogene hPTTG is expressed in pituitary tumors: evidence for hPTTG family.</title>
        <authorList>
            <person name="Prezant T.R."/>
            <person name="Kadioglu P."/>
            <person name="Melmed S."/>
        </authorList>
    </citation>
    <scope>NUCLEOTIDE SEQUENCE [GENOMIC DNA] (ISOFORM 2)</scope>
    <scope>TISSUE SPECIFICITY</scope>
    <scope>VARIANT PRO-44</scope>
</reference>
<reference key="2">
    <citation type="journal article" date="2000" name="Gene">
        <title>Identification of the human pituitary tumor transforming gene (hPTTG) family: molecular structure, expression, and chromosomal localization.</title>
        <authorList>
            <person name="Chen L."/>
            <person name="Puri R."/>
            <person name="Lefkowitz E.J."/>
            <person name="Kakar S.S."/>
        </authorList>
    </citation>
    <scope>NUCLEOTIDE SEQUENCE [GENOMIC DNA] (ISOFORM 1)</scope>
    <scope>TISSUE SPECIFICITY</scope>
    <scope>VARIANT PRO-44</scope>
</reference>
<reference key="3">
    <citation type="submission" date="1998-09" db="EMBL/GenBank/DDBJ databases">
        <authorList>
            <person name="Mu Y."/>
        </authorList>
    </citation>
    <scope>NUCLEOTIDE SEQUENCE [MRNA] (ISOFORM 2)</scope>
    <scope>VARIANT PRO-44</scope>
    <source>
        <tissue>Pituitary adenoma</tissue>
    </source>
</reference>
<reference key="4">
    <citation type="journal article" date="2005" name="Nature">
        <title>Generation and annotation of the DNA sequences of human chromosomes 2 and 4.</title>
        <authorList>
            <person name="Hillier L.W."/>
            <person name="Graves T.A."/>
            <person name="Fulton R.S."/>
            <person name="Fulton L.A."/>
            <person name="Pepin K.H."/>
            <person name="Minx P."/>
            <person name="Wagner-McPherson C."/>
            <person name="Layman D."/>
            <person name="Wylie K."/>
            <person name="Sekhon M."/>
            <person name="Becker M.C."/>
            <person name="Fewell G.A."/>
            <person name="Delehaunty K.D."/>
            <person name="Miner T.L."/>
            <person name="Nash W.E."/>
            <person name="Kremitzki C."/>
            <person name="Oddy L."/>
            <person name="Du H."/>
            <person name="Sun H."/>
            <person name="Bradshaw-Cordum H."/>
            <person name="Ali J."/>
            <person name="Carter J."/>
            <person name="Cordes M."/>
            <person name="Harris A."/>
            <person name="Isak A."/>
            <person name="van Brunt A."/>
            <person name="Nguyen C."/>
            <person name="Du F."/>
            <person name="Courtney L."/>
            <person name="Kalicki J."/>
            <person name="Ozersky P."/>
            <person name="Abbott S."/>
            <person name="Armstrong J."/>
            <person name="Belter E.A."/>
            <person name="Caruso L."/>
            <person name="Cedroni M."/>
            <person name="Cotton M."/>
            <person name="Davidson T."/>
            <person name="Desai A."/>
            <person name="Elliott G."/>
            <person name="Erb T."/>
            <person name="Fronick C."/>
            <person name="Gaige T."/>
            <person name="Haakenson W."/>
            <person name="Haglund K."/>
            <person name="Holmes A."/>
            <person name="Harkins R."/>
            <person name="Kim K."/>
            <person name="Kruchowski S.S."/>
            <person name="Strong C.M."/>
            <person name="Grewal N."/>
            <person name="Goyea E."/>
            <person name="Hou S."/>
            <person name="Levy A."/>
            <person name="Martinka S."/>
            <person name="Mead K."/>
            <person name="McLellan M.D."/>
            <person name="Meyer R."/>
            <person name="Randall-Maher J."/>
            <person name="Tomlinson C."/>
            <person name="Dauphin-Kohlberg S."/>
            <person name="Kozlowicz-Reilly A."/>
            <person name="Shah N."/>
            <person name="Swearengen-Shahid S."/>
            <person name="Snider J."/>
            <person name="Strong J.T."/>
            <person name="Thompson J."/>
            <person name="Yoakum M."/>
            <person name="Leonard S."/>
            <person name="Pearman C."/>
            <person name="Trani L."/>
            <person name="Radionenko M."/>
            <person name="Waligorski J.E."/>
            <person name="Wang C."/>
            <person name="Rock S.M."/>
            <person name="Tin-Wollam A.-M."/>
            <person name="Maupin R."/>
            <person name="Latreille P."/>
            <person name="Wendl M.C."/>
            <person name="Yang S.-P."/>
            <person name="Pohl C."/>
            <person name="Wallis J.W."/>
            <person name="Spieth J."/>
            <person name="Bieri T.A."/>
            <person name="Berkowicz N."/>
            <person name="Nelson J.O."/>
            <person name="Osborne J."/>
            <person name="Ding L."/>
            <person name="Meyer R."/>
            <person name="Sabo A."/>
            <person name="Shotland Y."/>
            <person name="Sinha P."/>
            <person name="Wohldmann P.E."/>
            <person name="Cook L.L."/>
            <person name="Hickenbotham M.T."/>
            <person name="Eldred J."/>
            <person name="Williams D."/>
            <person name="Jones T.A."/>
            <person name="She X."/>
            <person name="Ciccarelli F.D."/>
            <person name="Izaurralde E."/>
            <person name="Taylor J."/>
            <person name="Schmutz J."/>
            <person name="Myers R.M."/>
            <person name="Cox D.R."/>
            <person name="Huang X."/>
            <person name="McPherson J.D."/>
            <person name="Mardis E.R."/>
            <person name="Clifton S.W."/>
            <person name="Warren W.C."/>
            <person name="Chinwalla A.T."/>
            <person name="Eddy S.R."/>
            <person name="Marra M.A."/>
            <person name="Ovcharenko I."/>
            <person name="Furey T.S."/>
            <person name="Miller W."/>
            <person name="Eichler E.E."/>
            <person name="Bork P."/>
            <person name="Suyama M."/>
            <person name="Torrents D."/>
            <person name="Waterston R.H."/>
            <person name="Wilson R.K."/>
        </authorList>
    </citation>
    <scope>NUCLEOTIDE SEQUENCE [LARGE SCALE GENOMIC DNA]</scope>
</reference>
<reference key="5">
    <citation type="journal article" date="2004" name="Genome Res.">
        <title>The status, quality, and expansion of the NIH full-length cDNA project: the Mammalian Gene Collection (MGC).</title>
        <authorList>
            <consortium name="The MGC Project Team"/>
        </authorList>
    </citation>
    <scope>NUCLEOTIDE SEQUENCE [LARGE SCALE MRNA] (ISOFORM 2)</scope>
</reference>